<feature type="chain" id="PRO_1000072814" description="Phosphoribosylformylglycinamidine cyclo-ligase">
    <location>
        <begin position="1"/>
        <end position="347"/>
    </location>
</feature>
<proteinExistence type="inferred from homology"/>
<organism>
    <name type="scientific">Alkaliphilus metalliredigens (strain QYMF)</name>
    <dbReference type="NCBI Taxonomy" id="293826"/>
    <lineage>
        <taxon>Bacteria</taxon>
        <taxon>Bacillati</taxon>
        <taxon>Bacillota</taxon>
        <taxon>Clostridia</taxon>
        <taxon>Peptostreptococcales</taxon>
        <taxon>Natronincolaceae</taxon>
        <taxon>Alkaliphilus</taxon>
    </lineage>
</organism>
<gene>
    <name evidence="1" type="primary">purM</name>
    <name type="ordered locus">Amet_0923</name>
</gene>
<sequence>MAMPKLTYEEAGVNVQEGQRAVNLMKESVKSTFTKGVLGDIGGFGGLFALDPREMEKPILVAGTDGVGTKLKLAFMMNRHDTIGEDCVAMCVNDILCQGAKPLFFLDYIATGKLKAEVVAEIVQGIANGCKKAGCALIGGETAEMPGFYQKGEYDVAGFTVGMVEEKNLITGKEISQGDIMIGISSSGVHSNGFSLVRKLFFEDKQYSVDQYVDGLGETLGEALLRPTKIYVKPILEVLQQEKIKGMVHVTGGGFYENIPRILPEGIDANVHLDTWQAPPIFQFIQQEGQIEQDEMFSTFNMGIGMIVVVERSAGEKVVQLLQELGEEASIIGEMVRGSKQVVLCQK</sequence>
<dbReference type="EC" id="6.3.3.1" evidence="1"/>
<dbReference type="EMBL" id="CP000724">
    <property type="protein sequence ID" value="ABR47143.1"/>
    <property type="molecule type" value="Genomic_DNA"/>
</dbReference>
<dbReference type="RefSeq" id="WP_012062185.1">
    <property type="nucleotide sequence ID" value="NC_009633.1"/>
</dbReference>
<dbReference type="SMR" id="A6TLS5"/>
<dbReference type="STRING" id="293826.Amet_0923"/>
<dbReference type="KEGG" id="amt:Amet_0923"/>
<dbReference type="eggNOG" id="COG0150">
    <property type="taxonomic scope" value="Bacteria"/>
</dbReference>
<dbReference type="HOGENOM" id="CLU_047116_0_0_9"/>
<dbReference type="UniPathway" id="UPA00074">
    <property type="reaction ID" value="UER00129"/>
</dbReference>
<dbReference type="Proteomes" id="UP000001572">
    <property type="component" value="Chromosome"/>
</dbReference>
<dbReference type="GO" id="GO:0005829">
    <property type="term" value="C:cytosol"/>
    <property type="evidence" value="ECO:0007669"/>
    <property type="project" value="TreeGrafter"/>
</dbReference>
<dbReference type="GO" id="GO:0005524">
    <property type="term" value="F:ATP binding"/>
    <property type="evidence" value="ECO:0007669"/>
    <property type="project" value="UniProtKB-KW"/>
</dbReference>
<dbReference type="GO" id="GO:0004637">
    <property type="term" value="F:phosphoribosylamine-glycine ligase activity"/>
    <property type="evidence" value="ECO:0007669"/>
    <property type="project" value="TreeGrafter"/>
</dbReference>
<dbReference type="GO" id="GO:0004641">
    <property type="term" value="F:phosphoribosylformylglycinamidine cyclo-ligase activity"/>
    <property type="evidence" value="ECO:0007669"/>
    <property type="project" value="UniProtKB-UniRule"/>
</dbReference>
<dbReference type="GO" id="GO:0006189">
    <property type="term" value="P:'de novo' IMP biosynthetic process"/>
    <property type="evidence" value="ECO:0007669"/>
    <property type="project" value="UniProtKB-UniRule"/>
</dbReference>
<dbReference type="GO" id="GO:0046084">
    <property type="term" value="P:adenine biosynthetic process"/>
    <property type="evidence" value="ECO:0007669"/>
    <property type="project" value="TreeGrafter"/>
</dbReference>
<dbReference type="CDD" id="cd02196">
    <property type="entry name" value="PurM"/>
    <property type="match status" value="1"/>
</dbReference>
<dbReference type="FunFam" id="3.30.1330.10:FF:000001">
    <property type="entry name" value="Phosphoribosylformylglycinamidine cyclo-ligase"/>
    <property type="match status" value="1"/>
</dbReference>
<dbReference type="FunFam" id="3.90.650.10:FF:000001">
    <property type="entry name" value="Phosphoribosylformylglycinamidine cyclo-ligase"/>
    <property type="match status" value="1"/>
</dbReference>
<dbReference type="Gene3D" id="3.90.650.10">
    <property type="entry name" value="PurM-like C-terminal domain"/>
    <property type="match status" value="1"/>
</dbReference>
<dbReference type="Gene3D" id="3.30.1330.10">
    <property type="entry name" value="PurM-like, N-terminal domain"/>
    <property type="match status" value="1"/>
</dbReference>
<dbReference type="HAMAP" id="MF_00741">
    <property type="entry name" value="AIRS"/>
    <property type="match status" value="1"/>
</dbReference>
<dbReference type="InterPro" id="IPR010918">
    <property type="entry name" value="PurM-like_C_dom"/>
</dbReference>
<dbReference type="InterPro" id="IPR036676">
    <property type="entry name" value="PurM-like_C_sf"/>
</dbReference>
<dbReference type="InterPro" id="IPR016188">
    <property type="entry name" value="PurM-like_N"/>
</dbReference>
<dbReference type="InterPro" id="IPR036921">
    <property type="entry name" value="PurM-like_N_sf"/>
</dbReference>
<dbReference type="InterPro" id="IPR004733">
    <property type="entry name" value="PurM_cligase"/>
</dbReference>
<dbReference type="NCBIfam" id="TIGR00878">
    <property type="entry name" value="purM"/>
    <property type="match status" value="1"/>
</dbReference>
<dbReference type="PANTHER" id="PTHR10520:SF12">
    <property type="entry name" value="TRIFUNCTIONAL PURINE BIOSYNTHETIC PROTEIN ADENOSINE-3"/>
    <property type="match status" value="1"/>
</dbReference>
<dbReference type="PANTHER" id="PTHR10520">
    <property type="entry name" value="TRIFUNCTIONAL PURINE BIOSYNTHETIC PROTEIN ADENOSINE-3-RELATED"/>
    <property type="match status" value="1"/>
</dbReference>
<dbReference type="Pfam" id="PF00586">
    <property type="entry name" value="AIRS"/>
    <property type="match status" value="1"/>
</dbReference>
<dbReference type="Pfam" id="PF02769">
    <property type="entry name" value="AIRS_C"/>
    <property type="match status" value="1"/>
</dbReference>
<dbReference type="SUPFAM" id="SSF56042">
    <property type="entry name" value="PurM C-terminal domain-like"/>
    <property type="match status" value="1"/>
</dbReference>
<dbReference type="SUPFAM" id="SSF55326">
    <property type="entry name" value="PurM N-terminal domain-like"/>
    <property type="match status" value="1"/>
</dbReference>
<name>PUR5_ALKMQ</name>
<accession>A6TLS5</accession>
<protein>
    <recommendedName>
        <fullName evidence="1">Phosphoribosylformylglycinamidine cyclo-ligase</fullName>
        <ecNumber evidence="1">6.3.3.1</ecNumber>
    </recommendedName>
    <alternativeName>
        <fullName evidence="1">AIR synthase</fullName>
    </alternativeName>
    <alternativeName>
        <fullName evidence="1">AIRS</fullName>
    </alternativeName>
    <alternativeName>
        <fullName evidence="1">Phosphoribosyl-aminoimidazole synthetase</fullName>
    </alternativeName>
</protein>
<evidence type="ECO:0000255" key="1">
    <source>
        <dbReference type="HAMAP-Rule" id="MF_00741"/>
    </source>
</evidence>
<keyword id="KW-0067">ATP-binding</keyword>
<keyword id="KW-0963">Cytoplasm</keyword>
<keyword id="KW-0436">Ligase</keyword>
<keyword id="KW-0547">Nucleotide-binding</keyword>
<keyword id="KW-0658">Purine biosynthesis</keyword>
<keyword id="KW-1185">Reference proteome</keyword>
<comment type="catalytic activity">
    <reaction evidence="1">
        <text>2-formamido-N(1)-(5-O-phospho-beta-D-ribosyl)acetamidine + ATP = 5-amino-1-(5-phospho-beta-D-ribosyl)imidazole + ADP + phosphate + H(+)</text>
        <dbReference type="Rhea" id="RHEA:23032"/>
        <dbReference type="ChEBI" id="CHEBI:15378"/>
        <dbReference type="ChEBI" id="CHEBI:30616"/>
        <dbReference type="ChEBI" id="CHEBI:43474"/>
        <dbReference type="ChEBI" id="CHEBI:137981"/>
        <dbReference type="ChEBI" id="CHEBI:147287"/>
        <dbReference type="ChEBI" id="CHEBI:456216"/>
        <dbReference type="EC" id="6.3.3.1"/>
    </reaction>
</comment>
<comment type="pathway">
    <text evidence="1">Purine metabolism; IMP biosynthesis via de novo pathway; 5-amino-1-(5-phospho-D-ribosyl)imidazole from N(2)-formyl-N(1)-(5-phospho-D-ribosyl)glycinamide: step 2/2.</text>
</comment>
<comment type="subcellular location">
    <subcellularLocation>
        <location evidence="1">Cytoplasm</location>
    </subcellularLocation>
</comment>
<comment type="similarity">
    <text evidence="1">Belongs to the AIR synthase family.</text>
</comment>
<reference key="1">
    <citation type="journal article" date="2016" name="Genome Announc.">
        <title>Complete genome sequence of Alkaliphilus metalliredigens strain QYMF, an alkaliphilic and metal-reducing bacterium isolated from borax-contaminated leachate ponds.</title>
        <authorList>
            <person name="Hwang C."/>
            <person name="Copeland A."/>
            <person name="Lucas S."/>
            <person name="Lapidus A."/>
            <person name="Barry K."/>
            <person name="Detter J.C."/>
            <person name="Glavina Del Rio T."/>
            <person name="Hammon N."/>
            <person name="Israni S."/>
            <person name="Dalin E."/>
            <person name="Tice H."/>
            <person name="Pitluck S."/>
            <person name="Chertkov O."/>
            <person name="Brettin T."/>
            <person name="Bruce D."/>
            <person name="Han C."/>
            <person name="Schmutz J."/>
            <person name="Larimer F."/>
            <person name="Land M.L."/>
            <person name="Hauser L."/>
            <person name="Kyrpides N."/>
            <person name="Mikhailova N."/>
            <person name="Ye Q."/>
            <person name="Zhou J."/>
            <person name="Richardson P."/>
            <person name="Fields M.W."/>
        </authorList>
    </citation>
    <scope>NUCLEOTIDE SEQUENCE [LARGE SCALE GENOMIC DNA]</scope>
    <source>
        <strain>QYMF</strain>
    </source>
</reference>